<feature type="chain" id="PRO_0000405820" description="Coiled-coil domain-containing protein 39">
    <location>
        <begin position="1"/>
        <end position="894"/>
    </location>
</feature>
<feature type="region of interest" description="Disordered" evidence="2">
    <location>
        <begin position="844"/>
        <end position="894"/>
    </location>
</feature>
<feature type="coiled-coil region" evidence="1">
    <location>
        <begin position="32"/>
        <end position="143"/>
    </location>
</feature>
<feature type="coiled-coil region" evidence="1">
    <location>
        <begin position="187"/>
        <end position="411"/>
    </location>
</feature>
<feature type="coiled-coil region" evidence="1">
    <location>
        <begin position="461"/>
        <end position="609"/>
    </location>
</feature>
<feature type="coiled-coil region" evidence="1">
    <location>
        <begin position="647"/>
        <end position="788"/>
    </location>
</feature>
<feature type="compositionally biased region" description="Low complexity" evidence="2">
    <location>
        <begin position="844"/>
        <end position="857"/>
    </location>
</feature>
<organism>
    <name type="scientific">Chlamydomonas reinhardtii</name>
    <name type="common">Chlamydomonas smithii</name>
    <dbReference type="NCBI Taxonomy" id="3055"/>
    <lineage>
        <taxon>Eukaryota</taxon>
        <taxon>Viridiplantae</taxon>
        <taxon>Chlorophyta</taxon>
        <taxon>core chlorophytes</taxon>
        <taxon>Chlorophyceae</taxon>
        <taxon>CS clade</taxon>
        <taxon>Chlamydomonadales</taxon>
        <taxon>Chlamydomonadaceae</taxon>
        <taxon>Chlamydomonas</taxon>
    </lineage>
</organism>
<comment type="function">
    <text evidence="3">Required for assembly of dynein regulatory complex (DRC) and inner dynein arm complexes, which are responsible for ciliary beat regulation, by acting as a molecular ruler that determines the 96 nanometer (nm) repeat length and arrangements of components in cilia and flagella (PubMed:25395538). Together with CCDC40/FAP172 forms a 96-nm-long complex in flagella. This complex does not act as a physical ruler, but rather act as a negative regulator for radial spokes: the complex lays along specific protofilaments, masking radial spoke binding sites and allowing recruitment of inner dynein arm (IDA) and nexin-dynein regulatory complexes (N-DRC) (PubMed:25395538).</text>
</comment>
<comment type="subunit">
    <text evidence="3">Interacts with CCDC40/FAP172.</text>
</comment>
<comment type="interaction">
    <interactant intactId="EBI-16127597">
        <id>A8IQE0</id>
    </interactant>
    <interactant intactId="EBI-16127612">
        <id>A8IQT2</id>
        <label>CCDC40</label>
    </interactant>
    <organismsDiffer>false</organismsDiffer>
    <experiments>2</experiments>
</comment>
<comment type="subcellular location">
    <subcellularLocation>
        <location evidence="3">Cell projection</location>
        <location evidence="3">Cilium</location>
        <location evidence="3">Flagellum</location>
    </subcellularLocation>
</comment>
<comment type="PTM">
    <text evidence="3">Phosphorylated in flagella.</text>
</comment>
<comment type="disruption phenotype">
    <text evidence="3">Short and immotile flagella. Inner dynein arm (IDA) and nexin-dynein regulatory complex (N-DRC) components are absent or severely reduced. Radial spokes are attached to doublet microtubules with an irregular periodicity of 32 nm instead of 96 nm.</text>
</comment>
<comment type="similarity">
    <text evidence="5">Belongs to the CCDC39 family.</text>
</comment>
<sequence>MANIDPYRTEEELVEDDEEVDMSFLPPFAKGTENEVLYVENARMERRLERTERALETNMDRLHIMDEHLKNVQQELKYTQTRVEAKNKEIESEKHLNAMAEREMGRLKKDIGKMEAERQELADKINGLQNQIYKNNEKLDQFKMLMNWNQEELEQWALAERQKAEDNAALEKYRHADDGKVKELTLALERVSKQVVGRKEELEAEVVETQAAQIQLDKAAEDFRKLHVERQDLIRQWEEAVEAMRHRDAAIAAASEQFAMQKDVLRERKRELDAQARFLENETLNTKEADARVAYYEREVGKQRDVLAREQARTEELNNQVELVKATLSKAATELAQRTVENKQAREDLDAKRQKLDAARKRFVVLKRKLENEFGNLDSMEAKASELEAMRRGEEARLKAILKEHELLKKEQYKRSQVLFDLRQKERELISEISGGQGQNKNLAARIHALDEQVVARAGGVRSEEETRALNARIEKLTAILEGVKRAEDDLLAARRANTSLRADRAKLDETISTLKLENDMVSRQVKGSVEAREKALVDHDVLALEVKRLRDILAAHADEVFSLENRKQQLALSMEERKQEVEVHRDGLRAELRLLREDVHRITLELKERLLRCEKLQAKFEIISAKHRGSGEDDGEERTQAYYVIKAAQEREALQREGDDLDGRIRVAEKEVAALEATLAQLMAVNTNFAASYKKVGSKEAFEERAALRDKLDKAYDKLKARRADEAAIAGDIQVSEARLSNLGQEQRSLQALVDDMTRRKAEAQRQLDEQREKLGRALGRTDKLRQKLGLANSPQGADVELAEVRDVTRAMLLELKALALANPGAMIAEACEAAGIRLPSGGSNPPSLGGSRPGSARSQTSLGSVRSARSVASQQRGGMGGSPAVRTIQLGA</sequence>
<protein>
    <recommendedName>
        <fullName evidence="5">Coiled-coil domain-containing protein 39</fullName>
    </recommendedName>
    <alternativeName>
        <fullName evidence="4">Flagellar-associated protein 59</fullName>
    </alternativeName>
</protein>
<keyword id="KW-0966">Cell projection</keyword>
<keyword id="KW-0969">Cilium</keyword>
<keyword id="KW-0970">Cilium biogenesis/degradation</keyword>
<keyword id="KW-0175">Coiled coil</keyword>
<keyword id="KW-0282">Flagellum</keyword>
<keyword id="KW-0597">Phosphoprotein</keyword>
<name>CCD39_CHLRE</name>
<gene>
    <name type="primary">CCDC39</name>
    <name evidence="4" type="synonym">FAP59</name>
    <name evidence="6" type="ORF">CHLREDRAFT_189109</name>
</gene>
<proteinExistence type="evidence at protein level"/>
<accession>A8IQE0</accession>
<reference key="1">
    <citation type="journal article" date="2007" name="Science">
        <title>The Chlamydomonas genome reveals the evolution of key animal and plant functions.</title>
        <authorList>
            <person name="Merchant S.S."/>
            <person name="Prochnik S.E."/>
            <person name="Vallon O."/>
            <person name="Harris E.H."/>
            <person name="Karpowicz S.J."/>
            <person name="Witman G.B."/>
            <person name="Terry A."/>
            <person name="Salamov A."/>
            <person name="Fritz-Laylin L.K."/>
            <person name="Marechal-Drouard L."/>
            <person name="Marshall W.F."/>
            <person name="Qu L.H."/>
            <person name="Nelson D.R."/>
            <person name="Sanderfoot A.A."/>
            <person name="Spalding M.H."/>
            <person name="Kapitonov V.V."/>
            <person name="Ren Q."/>
            <person name="Ferris P."/>
            <person name="Lindquist E."/>
            <person name="Shapiro H."/>
            <person name="Lucas S.M."/>
            <person name="Grimwood J."/>
            <person name="Schmutz J."/>
            <person name="Cardol P."/>
            <person name="Cerutti H."/>
            <person name="Chanfreau G."/>
            <person name="Chen C.L."/>
            <person name="Cognat V."/>
            <person name="Croft M.T."/>
            <person name="Dent R."/>
            <person name="Dutcher S."/>
            <person name="Fernandez E."/>
            <person name="Fukuzawa H."/>
            <person name="Gonzalez-Ballester D."/>
            <person name="Gonzalez-Halphen D."/>
            <person name="Hallmann A."/>
            <person name="Hanikenne M."/>
            <person name="Hippler M."/>
            <person name="Inwood W."/>
            <person name="Jabbari K."/>
            <person name="Kalanon M."/>
            <person name="Kuras R."/>
            <person name="Lefebvre P.A."/>
            <person name="Lemaire S.D."/>
            <person name="Lobanov A.V."/>
            <person name="Lohr M."/>
            <person name="Manuell A."/>
            <person name="Meier I."/>
            <person name="Mets L."/>
            <person name="Mittag M."/>
            <person name="Mittelmeier T."/>
            <person name="Moroney J.V."/>
            <person name="Moseley J."/>
            <person name="Napoli C."/>
            <person name="Nedelcu A.M."/>
            <person name="Niyogi K."/>
            <person name="Novoselov S.V."/>
            <person name="Paulsen I.T."/>
            <person name="Pazour G.J."/>
            <person name="Purton S."/>
            <person name="Ral J.P."/>
            <person name="Riano-Pachon D.M."/>
            <person name="Riekhof W."/>
            <person name="Rymarquis L."/>
            <person name="Schroda M."/>
            <person name="Stern D."/>
            <person name="Umen J."/>
            <person name="Willows R."/>
            <person name="Wilson N."/>
            <person name="Zimmer S.L."/>
            <person name="Allmer J."/>
            <person name="Balk J."/>
            <person name="Bisova K."/>
            <person name="Chen C.J."/>
            <person name="Elias M."/>
            <person name="Gendler K."/>
            <person name="Hauser C."/>
            <person name="Lamb M.R."/>
            <person name="Ledford H."/>
            <person name="Long J.C."/>
            <person name="Minagawa J."/>
            <person name="Page M.D."/>
            <person name="Pan J."/>
            <person name="Pootakham W."/>
            <person name="Roje S."/>
            <person name="Rose A."/>
            <person name="Stahlberg E."/>
            <person name="Terauchi A.M."/>
            <person name="Yang P."/>
            <person name="Ball S."/>
            <person name="Bowler C."/>
            <person name="Dieckmann C.L."/>
            <person name="Gladyshev V.N."/>
            <person name="Green P."/>
            <person name="Jorgensen R."/>
            <person name="Mayfield S."/>
            <person name="Mueller-Roeber B."/>
            <person name="Rajamani S."/>
            <person name="Sayre R.T."/>
            <person name="Brokstein P."/>
            <person name="Dubchak I."/>
            <person name="Goodstein D."/>
            <person name="Hornick L."/>
            <person name="Huang Y.W."/>
            <person name="Jhaveri J."/>
            <person name="Luo Y."/>
            <person name="Martinez D."/>
            <person name="Ngau W.C."/>
            <person name="Otillar B."/>
            <person name="Poliakov A."/>
            <person name="Porter A."/>
            <person name="Szajkowski L."/>
            <person name="Werner G."/>
            <person name="Zhou K."/>
            <person name="Grigoriev I.V."/>
            <person name="Rokhsar D.S."/>
            <person name="Grossman A.R."/>
        </authorList>
    </citation>
    <scope>NUCLEOTIDE SEQUENCE [LARGE SCALE GENOMIC DNA]</scope>
    <source>
        <strain>CC-503</strain>
        <strain>cw92</strain>
    </source>
</reference>
<reference key="2">
    <citation type="journal article" date="2005" name="J. Cell Biol.">
        <title>Proteomic analysis of a eukaryotic cilium.</title>
        <authorList>
            <person name="Pazour G.J."/>
            <person name="Agrin N."/>
            <person name="Leszyk J."/>
            <person name="Witman G.B."/>
        </authorList>
    </citation>
    <scope>IDENTIFICATION BY MASS SPECTROMETRY</scope>
</reference>
<reference key="3">
    <citation type="journal article" date="2014" name="Science">
        <title>Cilia and flagella. A molecular ruler determines the repeat length in eukaryotic cilia and flagella.</title>
        <authorList>
            <person name="Oda T."/>
            <person name="Yanagisawa H."/>
            <person name="Kamiya R."/>
            <person name="Kikkawa M."/>
        </authorList>
    </citation>
    <scope>FUNCTION</scope>
    <scope>SUBCELLULAR LOCATION</scope>
    <scope>INTERACTION WITH CCDC40/FAP172</scope>
    <scope>DISRUPTION PHENOTYPE</scope>
    <scope>PHOSPHORYLATION</scope>
</reference>
<evidence type="ECO:0000255" key="1"/>
<evidence type="ECO:0000256" key="2">
    <source>
        <dbReference type="SAM" id="MobiDB-lite"/>
    </source>
</evidence>
<evidence type="ECO:0000269" key="3">
    <source>
    </source>
</evidence>
<evidence type="ECO:0000303" key="4">
    <source>
    </source>
</evidence>
<evidence type="ECO:0000305" key="5"/>
<evidence type="ECO:0000312" key="6">
    <source>
        <dbReference type="EMBL" id="EDP04876.1"/>
    </source>
</evidence>
<dbReference type="EMBL" id="DS496120">
    <property type="protein sequence ID" value="EDP04876.1"/>
    <property type="molecule type" value="Genomic_DNA"/>
</dbReference>
<dbReference type="RefSeq" id="XP_001691768.1">
    <property type="nucleotide sequence ID" value="XM_001691716.1"/>
</dbReference>
<dbReference type="SMR" id="A8IQE0"/>
<dbReference type="DIP" id="DIP-61434N"/>
<dbReference type="IntAct" id="A8IQE0">
    <property type="interactions" value="1"/>
</dbReference>
<dbReference type="PaxDb" id="3055-EDP04876"/>
<dbReference type="eggNOG" id="ENOG502QS0D">
    <property type="taxonomic scope" value="Eukaryota"/>
</dbReference>
<dbReference type="HOGENOM" id="CLU_009793_2_0_1"/>
<dbReference type="GO" id="GO:0005930">
    <property type="term" value="C:axoneme"/>
    <property type="evidence" value="ECO:0007669"/>
    <property type="project" value="InterPro"/>
</dbReference>
<dbReference type="GO" id="GO:0031514">
    <property type="term" value="C:motile cilium"/>
    <property type="evidence" value="ECO:0007669"/>
    <property type="project" value="UniProtKB-SubCell"/>
</dbReference>
<dbReference type="GO" id="GO:0003341">
    <property type="term" value="P:cilium movement"/>
    <property type="evidence" value="ECO:0007669"/>
    <property type="project" value="InterPro"/>
</dbReference>
<dbReference type="GO" id="GO:0036159">
    <property type="term" value="P:inner dynein arm assembly"/>
    <property type="evidence" value="ECO:0007669"/>
    <property type="project" value="InterPro"/>
</dbReference>
<dbReference type="InterPro" id="IPR033290">
    <property type="entry name" value="CCDC39"/>
</dbReference>
<dbReference type="PANTHER" id="PTHR18962">
    <property type="entry name" value="COILED-COIL DOMAIN-CONTAINING PROTEIN 39"/>
    <property type="match status" value="1"/>
</dbReference>
<dbReference type="PANTHER" id="PTHR18962:SF0">
    <property type="entry name" value="COILED-COIL DOMAIN-CONTAINING PROTEIN 39"/>
    <property type="match status" value="1"/>
</dbReference>
<dbReference type="Pfam" id="PF24161">
    <property type="entry name" value="CCDC39"/>
    <property type="match status" value="1"/>
</dbReference>